<accession>Q7J6G4</accession>
<geneLocation type="mitochondrion"/>
<dbReference type="EC" id="7.1.1.9"/>
<dbReference type="EMBL" id="AF028207">
    <property type="protein sequence ID" value="AAC00100.1"/>
    <property type="molecule type" value="Genomic_DNA"/>
</dbReference>
<dbReference type="SMR" id="Q7J6G4"/>
<dbReference type="GO" id="GO:0005743">
    <property type="term" value="C:mitochondrial inner membrane"/>
    <property type="evidence" value="ECO:0007669"/>
    <property type="project" value="UniProtKB-SubCell"/>
</dbReference>
<dbReference type="GO" id="GO:0045277">
    <property type="term" value="C:respiratory chain complex IV"/>
    <property type="evidence" value="ECO:0000250"/>
    <property type="project" value="UniProtKB"/>
</dbReference>
<dbReference type="GO" id="GO:0005507">
    <property type="term" value="F:copper ion binding"/>
    <property type="evidence" value="ECO:0007669"/>
    <property type="project" value="InterPro"/>
</dbReference>
<dbReference type="GO" id="GO:0004129">
    <property type="term" value="F:cytochrome-c oxidase activity"/>
    <property type="evidence" value="ECO:0007669"/>
    <property type="project" value="UniProtKB-EC"/>
</dbReference>
<dbReference type="GO" id="GO:0042773">
    <property type="term" value="P:ATP synthesis coupled electron transport"/>
    <property type="evidence" value="ECO:0007669"/>
    <property type="project" value="TreeGrafter"/>
</dbReference>
<dbReference type="CDD" id="cd13912">
    <property type="entry name" value="CcO_II_C"/>
    <property type="match status" value="1"/>
</dbReference>
<dbReference type="FunFam" id="1.10.287.90:FF:000001">
    <property type="entry name" value="Cytochrome c oxidase subunit 2"/>
    <property type="match status" value="1"/>
</dbReference>
<dbReference type="FunFam" id="2.60.40.420:FF:000001">
    <property type="entry name" value="Cytochrome c oxidase subunit 2"/>
    <property type="match status" value="1"/>
</dbReference>
<dbReference type="Gene3D" id="1.10.287.90">
    <property type="match status" value="1"/>
</dbReference>
<dbReference type="Gene3D" id="2.60.40.420">
    <property type="entry name" value="Cupredoxins - blue copper proteins"/>
    <property type="match status" value="1"/>
</dbReference>
<dbReference type="InterPro" id="IPR045187">
    <property type="entry name" value="CcO_II"/>
</dbReference>
<dbReference type="InterPro" id="IPR002429">
    <property type="entry name" value="CcO_II-like_C"/>
</dbReference>
<dbReference type="InterPro" id="IPR034210">
    <property type="entry name" value="CcO_II_C"/>
</dbReference>
<dbReference type="InterPro" id="IPR001505">
    <property type="entry name" value="Copper_CuA"/>
</dbReference>
<dbReference type="InterPro" id="IPR008972">
    <property type="entry name" value="Cupredoxin"/>
</dbReference>
<dbReference type="InterPro" id="IPR014222">
    <property type="entry name" value="Cyt_c_oxidase_su2"/>
</dbReference>
<dbReference type="InterPro" id="IPR011759">
    <property type="entry name" value="Cyt_c_oxidase_su2_TM_dom"/>
</dbReference>
<dbReference type="InterPro" id="IPR036257">
    <property type="entry name" value="Cyt_c_oxidase_su2_TM_sf"/>
</dbReference>
<dbReference type="NCBIfam" id="TIGR02866">
    <property type="entry name" value="CoxB"/>
    <property type="match status" value="1"/>
</dbReference>
<dbReference type="PANTHER" id="PTHR22888:SF9">
    <property type="entry name" value="CYTOCHROME C OXIDASE SUBUNIT 2"/>
    <property type="match status" value="1"/>
</dbReference>
<dbReference type="PANTHER" id="PTHR22888">
    <property type="entry name" value="CYTOCHROME C OXIDASE, SUBUNIT II"/>
    <property type="match status" value="1"/>
</dbReference>
<dbReference type="Pfam" id="PF00116">
    <property type="entry name" value="COX2"/>
    <property type="match status" value="1"/>
</dbReference>
<dbReference type="Pfam" id="PF02790">
    <property type="entry name" value="COX2_TM"/>
    <property type="match status" value="1"/>
</dbReference>
<dbReference type="PRINTS" id="PR01166">
    <property type="entry name" value="CYCOXIDASEII"/>
</dbReference>
<dbReference type="SUPFAM" id="SSF49503">
    <property type="entry name" value="Cupredoxins"/>
    <property type="match status" value="1"/>
</dbReference>
<dbReference type="SUPFAM" id="SSF81464">
    <property type="entry name" value="Cytochrome c oxidase subunit II-like, transmembrane region"/>
    <property type="match status" value="1"/>
</dbReference>
<dbReference type="PROSITE" id="PS00078">
    <property type="entry name" value="COX2"/>
    <property type="match status" value="1"/>
</dbReference>
<dbReference type="PROSITE" id="PS50857">
    <property type="entry name" value="COX2_CUA"/>
    <property type="match status" value="1"/>
</dbReference>
<dbReference type="PROSITE" id="PS50999">
    <property type="entry name" value="COX2_TM"/>
    <property type="match status" value="1"/>
</dbReference>
<keyword id="KW-0186">Copper</keyword>
<keyword id="KW-0249">Electron transport</keyword>
<keyword id="KW-0460">Magnesium</keyword>
<keyword id="KW-0472">Membrane</keyword>
<keyword id="KW-0479">Metal-binding</keyword>
<keyword id="KW-0496">Mitochondrion</keyword>
<keyword id="KW-0999">Mitochondrion inner membrane</keyword>
<keyword id="KW-0597">Phosphoprotein</keyword>
<keyword id="KW-0679">Respiratory chain</keyword>
<keyword id="KW-1278">Translocase</keyword>
<keyword id="KW-0812">Transmembrane</keyword>
<keyword id="KW-1133">Transmembrane helix</keyword>
<keyword id="KW-0813">Transport</keyword>
<gene>
    <name type="primary">MT-CO2</name>
    <name type="synonym">COII</name>
    <name type="synonym">COXII</name>
    <name type="synonym">MTCO2</name>
</gene>
<protein>
    <recommendedName>
        <fullName>Cytochrome c oxidase subunit 2</fullName>
        <ecNumber>7.1.1.9</ecNumber>
    </recommendedName>
    <alternativeName>
        <fullName>Cytochrome c oxidase polypeptide II</fullName>
    </alternativeName>
</protein>
<name>COX2_ATEMI</name>
<comment type="function">
    <text evidence="2">Component of the cytochrome c oxidase, the last enzyme in the mitochondrial electron transport chain which drives oxidative phosphorylation. The respiratory chain contains 3 multisubunit complexes succinate dehydrogenase (complex II, CII), ubiquinol-cytochrome c oxidoreductase (cytochrome b-c1 complex, complex III, CIII) and cytochrome c oxidase (complex IV, CIV), that cooperate to transfer electrons derived from NADH and succinate to molecular oxygen, creating an electrochemical gradient over the inner membrane that drives transmembrane transport and the ATP synthase. Cytochrome c oxidase is the component of the respiratory chain that catalyzes the reduction of oxygen to water. Electrons originating from reduced cytochrome c in the intermembrane space (IMS) are transferred via the dinuclear copper A center (CU(A)) of subunit 2 and heme A of subunit 1 to the active site in subunit 1, a binuclear center (BNC) formed by heme A3 and copper B (CU(B)). The BNC reduces molecular oxygen to 2 water molecules using 4 electrons from cytochrome c in the IMS and 4 protons from the mitochondrial matrix.</text>
</comment>
<comment type="catalytic activity">
    <reaction evidence="2">
        <text>4 Fe(II)-[cytochrome c] + O2 + 8 H(+)(in) = 4 Fe(III)-[cytochrome c] + 2 H2O + 4 H(+)(out)</text>
        <dbReference type="Rhea" id="RHEA:11436"/>
        <dbReference type="Rhea" id="RHEA-COMP:10350"/>
        <dbReference type="Rhea" id="RHEA-COMP:14399"/>
        <dbReference type="ChEBI" id="CHEBI:15377"/>
        <dbReference type="ChEBI" id="CHEBI:15378"/>
        <dbReference type="ChEBI" id="CHEBI:15379"/>
        <dbReference type="ChEBI" id="CHEBI:29033"/>
        <dbReference type="ChEBI" id="CHEBI:29034"/>
        <dbReference type="EC" id="7.1.1.9"/>
    </reaction>
    <physiologicalReaction direction="left-to-right" evidence="2">
        <dbReference type="Rhea" id="RHEA:11437"/>
    </physiologicalReaction>
</comment>
<comment type="cofactor">
    <cofactor evidence="3">
        <name>Cu cation</name>
        <dbReference type="ChEBI" id="CHEBI:23378"/>
    </cofactor>
    <text evidence="3">Binds a dinuclear copper A center per subunit.</text>
</comment>
<comment type="subunit">
    <text evidence="1 3">Component of the cytochrome c oxidase (complex IV, CIV), a multisubunit enzyme composed of 14 subunits. The complex is composed of a catalytic core of 3 subunits MT-CO1, MT-CO2 and MT-CO3, encoded in the mitochondrial DNA, and 11 supernumerary subunits COX4I, COX5A, COX5B, COX6A, COX6B, COX6C, COX7A, COX7B, COX7C, COX8 and NDUFA4, which are encoded in the nuclear genome. The complex exists as a monomer or a dimer and forms supercomplexes (SCs) in the inner mitochondrial membrane with NADH-ubiquinone oxidoreductase (complex I, CI) and ubiquinol-cytochrome c oxidoreductase (cytochrome b-c1 complex, complex III, CIII), resulting in different assemblies (supercomplex SCI(1)III(2)IV(1) and megacomplex MCI(2)III(2)IV(2)) (By similarity). Found in a complex with TMEM177, COA6, COX18, COX20, SCO1 and SCO2. Interacts with TMEM177 in a COX20-dependent manner. Interacts with COX20. Interacts with COX16 (By similarity).</text>
</comment>
<comment type="subcellular location">
    <subcellularLocation>
        <location evidence="3">Mitochondrion inner membrane</location>
        <topology evidence="3">Multi-pass membrane protein</topology>
    </subcellularLocation>
</comment>
<comment type="similarity">
    <text evidence="4">Belongs to the cytochrome c oxidase subunit 2 family.</text>
</comment>
<evidence type="ECO:0000250" key="1">
    <source>
        <dbReference type="UniProtKB" id="P00403"/>
    </source>
</evidence>
<evidence type="ECO:0000250" key="2">
    <source>
        <dbReference type="UniProtKB" id="P00410"/>
    </source>
</evidence>
<evidence type="ECO:0000250" key="3">
    <source>
        <dbReference type="UniProtKB" id="P68530"/>
    </source>
</evidence>
<evidence type="ECO:0000305" key="4"/>
<sequence length="227" mass="26048">MAYPFQLGLQDATSPIMEELLHFHDHTLMIVFLISSLVLYIISLMLTTKLTHTSTMDAQEVETVWTILPAIILILIALPSLRILYMMDEINNPSLTVKTMGHQWYWSYEYTDYEDLNFDSYMIPTQELKPGELRLLEVDNRVVLPMEMTVRMLISSEDVLHSWAVPSLGLKTDAIPGRLNQTTLMAMRPGLYYGQCSEICGSNHSFMPIVLEMVPLSYFETWSALMV</sequence>
<reference key="1">
    <citation type="journal article" date="1997" name="Syst. Biol.">
        <title>Molecular systematics of the Canidae.</title>
        <authorList>
            <person name="Wayne R.K."/>
            <person name="Geffen E."/>
            <person name="Girman D.J."/>
            <person name="Koepfli K.-P."/>
            <person name="Lau L.M."/>
            <person name="Marshall C.R."/>
        </authorList>
    </citation>
    <scope>NUCLEOTIDE SEQUENCE [GENOMIC DNA]</scope>
</reference>
<feature type="chain" id="PRO_0000183506" description="Cytochrome c oxidase subunit 2">
    <location>
        <begin position="1"/>
        <end position="227"/>
    </location>
</feature>
<feature type="topological domain" description="Mitochondrial intermembrane" evidence="3">
    <location>
        <begin position="1"/>
        <end position="14"/>
    </location>
</feature>
<feature type="transmembrane region" description="Helical; Name=I" evidence="3">
    <location>
        <begin position="15"/>
        <end position="45"/>
    </location>
</feature>
<feature type="topological domain" description="Mitochondrial matrix" evidence="3">
    <location>
        <begin position="46"/>
        <end position="59"/>
    </location>
</feature>
<feature type="transmembrane region" description="Helical; Name=II" evidence="3">
    <location>
        <begin position="60"/>
        <end position="87"/>
    </location>
</feature>
<feature type="topological domain" description="Mitochondrial intermembrane" evidence="3">
    <location>
        <begin position="88"/>
        <end position="227"/>
    </location>
</feature>
<feature type="binding site" evidence="3">
    <location>
        <position position="161"/>
    </location>
    <ligand>
        <name>Cu cation</name>
        <dbReference type="ChEBI" id="CHEBI:23378"/>
        <label>A1</label>
    </ligand>
</feature>
<feature type="binding site" evidence="3">
    <location>
        <position position="196"/>
    </location>
    <ligand>
        <name>Cu cation</name>
        <dbReference type="ChEBI" id="CHEBI:23378"/>
        <label>A1</label>
    </ligand>
</feature>
<feature type="binding site" evidence="3">
    <location>
        <position position="196"/>
    </location>
    <ligand>
        <name>Cu cation</name>
        <dbReference type="ChEBI" id="CHEBI:23378"/>
        <label>A2</label>
    </ligand>
</feature>
<feature type="binding site" evidence="3">
    <location>
        <position position="198"/>
    </location>
    <ligand>
        <name>Cu cation</name>
        <dbReference type="ChEBI" id="CHEBI:23378"/>
        <label>A2</label>
    </ligand>
</feature>
<feature type="binding site" evidence="3">
    <location>
        <position position="198"/>
    </location>
    <ligand>
        <name>Mg(2+)</name>
        <dbReference type="ChEBI" id="CHEBI:18420"/>
        <note>ligand shared with MT-CO1</note>
    </ligand>
</feature>
<feature type="binding site" evidence="3">
    <location>
        <position position="200"/>
    </location>
    <ligand>
        <name>Cu cation</name>
        <dbReference type="ChEBI" id="CHEBI:23378"/>
        <label>A1</label>
    </ligand>
</feature>
<feature type="binding site" evidence="3">
    <location>
        <position position="200"/>
    </location>
    <ligand>
        <name>Cu cation</name>
        <dbReference type="ChEBI" id="CHEBI:23378"/>
        <label>A2</label>
    </ligand>
</feature>
<feature type="binding site" evidence="3">
    <location>
        <position position="204"/>
    </location>
    <ligand>
        <name>Cu cation</name>
        <dbReference type="ChEBI" id="CHEBI:23378"/>
        <label>A2</label>
    </ligand>
</feature>
<feature type="binding site" evidence="3">
    <location>
        <position position="207"/>
    </location>
    <ligand>
        <name>Cu cation</name>
        <dbReference type="ChEBI" id="CHEBI:23378"/>
        <label>A1</label>
    </ligand>
</feature>
<proteinExistence type="inferred from homology"/>
<organism>
    <name type="scientific">Atelocynus microtis</name>
    <name type="common">Short-eared dog</name>
    <name type="synonym">Dusicyon microtis</name>
    <dbReference type="NCBI Taxonomy" id="68722"/>
    <lineage>
        <taxon>Eukaryota</taxon>
        <taxon>Metazoa</taxon>
        <taxon>Chordata</taxon>
        <taxon>Craniata</taxon>
        <taxon>Vertebrata</taxon>
        <taxon>Euteleostomi</taxon>
        <taxon>Mammalia</taxon>
        <taxon>Eutheria</taxon>
        <taxon>Laurasiatheria</taxon>
        <taxon>Carnivora</taxon>
        <taxon>Caniformia</taxon>
        <taxon>Canidae</taxon>
        <taxon>Atelocynus</taxon>
    </lineage>
</organism>